<protein>
    <recommendedName>
        <fullName>Actin-2, muscle-specific</fullName>
        <ecNumber evidence="2">3.6.4.-</ecNumber>
    </recommendedName>
</protein>
<dbReference type="EC" id="3.6.4.-" evidence="2"/>
<dbReference type="EMBL" id="L12254">
    <property type="protein sequence ID" value="AAA62342.1"/>
    <property type="molecule type" value="Genomic_DNA"/>
</dbReference>
<dbReference type="RefSeq" id="XP_011202215.1">
    <property type="nucleotide sequence ID" value="XM_011203913.3"/>
</dbReference>
<dbReference type="SMR" id="P45885"/>
<dbReference type="FunCoup" id="P45885">
    <property type="interactions" value="23"/>
</dbReference>
<dbReference type="EnsemblMetazoa" id="XM_011203913.2">
    <property type="protein sequence ID" value="XP_011202215.1"/>
    <property type="gene ID" value="LOC105225453"/>
</dbReference>
<dbReference type="GeneID" id="105225453"/>
<dbReference type="KEGG" id="bdr:105225453"/>
<dbReference type="InParanoid" id="P45885"/>
<dbReference type="OMA" id="FHAPAMY"/>
<dbReference type="OrthoDB" id="422673at2759"/>
<dbReference type="Proteomes" id="UP000504616">
    <property type="component" value="Unplaced"/>
</dbReference>
<dbReference type="GO" id="GO:0005737">
    <property type="term" value="C:cytoplasm"/>
    <property type="evidence" value="ECO:0007669"/>
    <property type="project" value="UniProtKB-KW"/>
</dbReference>
<dbReference type="GO" id="GO:0005856">
    <property type="term" value="C:cytoskeleton"/>
    <property type="evidence" value="ECO:0007669"/>
    <property type="project" value="UniProtKB-SubCell"/>
</dbReference>
<dbReference type="GO" id="GO:0005524">
    <property type="term" value="F:ATP binding"/>
    <property type="evidence" value="ECO:0007669"/>
    <property type="project" value="UniProtKB-KW"/>
</dbReference>
<dbReference type="GO" id="GO:0016787">
    <property type="term" value="F:hydrolase activity"/>
    <property type="evidence" value="ECO:0007669"/>
    <property type="project" value="UniProtKB-KW"/>
</dbReference>
<dbReference type="CDD" id="cd10224">
    <property type="entry name" value="ASKHA_NBD_actin"/>
    <property type="match status" value="1"/>
</dbReference>
<dbReference type="FunFam" id="3.30.420.40:FF:000131">
    <property type="entry name" value="Actin, alpha skeletal muscle"/>
    <property type="match status" value="1"/>
</dbReference>
<dbReference type="FunFam" id="3.30.420.40:FF:000291">
    <property type="entry name" value="Actin, alpha skeletal muscle"/>
    <property type="match status" value="1"/>
</dbReference>
<dbReference type="FunFam" id="3.90.640.10:FF:000047">
    <property type="entry name" value="Actin, alpha skeletal muscle"/>
    <property type="match status" value="1"/>
</dbReference>
<dbReference type="FunFam" id="3.30.420.40:FF:000058">
    <property type="entry name" value="Putative actin-related protein 5"/>
    <property type="match status" value="1"/>
</dbReference>
<dbReference type="Gene3D" id="3.30.420.40">
    <property type="match status" value="2"/>
</dbReference>
<dbReference type="Gene3D" id="3.90.640.10">
    <property type="entry name" value="Actin, Chain A, domain 4"/>
    <property type="match status" value="1"/>
</dbReference>
<dbReference type="InterPro" id="IPR004000">
    <property type="entry name" value="Actin"/>
</dbReference>
<dbReference type="InterPro" id="IPR020902">
    <property type="entry name" value="Actin/actin-like_CS"/>
</dbReference>
<dbReference type="InterPro" id="IPR004001">
    <property type="entry name" value="Actin_CS"/>
</dbReference>
<dbReference type="InterPro" id="IPR043129">
    <property type="entry name" value="ATPase_NBD"/>
</dbReference>
<dbReference type="PANTHER" id="PTHR11937">
    <property type="entry name" value="ACTIN"/>
    <property type="match status" value="1"/>
</dbReference>
<dbReference type="Pfam" id="PF00022">
    <property type="entry name" value="Actin"/>
    <property type="match status" value="1"/>
</dbReference>
<dbReference type="PRINTS" id="PR00190">
    <property type="entry name" value="ACTIN"/>
</dbReference>
<dbReference type="SMART" id="SM00268">
    <property type="entry name" value="ACTIN"/>
    <property type="match status" value="1"/>
</dbReference>
<dbReference type="SUPFAM" id="SSF53067">
    <property type="entry name" value="Actin-like ATPase domain"/>
    <property type="match status" value="2"/>
</dbReference>
<dbReference type="PROSITE" id="PS00406">
    <property type="entry name" value="ACTINS_1"/>
    <property type="match status" value="1"/>
</dbReference>
<dbReference type="PROSITE" id="PS00432">
    <property type="entry name" value="ACTINS_2"/>
    <property type="match status" value="1"/>
</dbReference>
<dbReference type="PROSITE" id="PS01132">
    <property type="entry name" value="ACTINS_ACT_LIKE"/>
    <property type="match status" value="1"/>
</dbReference>
<feature type="propeptide" id="PRO_0000000616" description="Removed in mature form" evidence="1">
    <location>
        <begin position="1"/>
        <end position="2"/>
    </location>
</feature>
<feature type="chain" id="PRO_0000000617" description="Actin-2, muscle-specific">
    <location>
        <begin position="3"/>
        <end position="376"/>
    </location>
</feature>
<feature type="modified residue" description="N-acetylaspartate" evidence="1">
    <location>
        <position position="3"/>
    </location>
</feature>
<feature type="modified residue" description="Methionine sulfoxide" evidence="1">
    <location>
        <position position="45"/>
    </location>
</feature>
<feature type="modified residue" description="Methionine sulfoxide" evidence="1">
    <location>
        <position position="48"/>
    </location>
</feature>
<evidence type="ECO:0000250" key="1"/>
<evidence type="ECO:0000250" key="2">
    <source>
        <dbReference type="UniProtKB" id="P68137"/>
    </source>
</evidence>
<evidence type="ECO:0000305" key="3"/>
<organism>
    <name type="scientific">Bactrocera dorsalis</name>
    <name type="common">Oriental fruit fly</name>
    <name type="synonym">Dacus dorsalis</name>
    <dbReference type="NCBI Taxonomy" id="27457"/>
    <lineage>
        <taxon>Eukaryota</taxon>
        <taxon>Metazoa</taxon>
        <taxon>Ecdysozoa</taxon>
        <taxon>Arthropoda</taxon>
        <taxon>Hexapoda</taxon>
        <taxon>Insecta</taxon>
        <taxon>Pterygota</taxon>
        <taxon>Neoptera</taxon>
        <taxon>Endopterygota</taxon>
        <taxon>Diptera</taxon>
        <taxon>Brachycera</taxon>
        <taxon>Muscomorpha</taxon>
        <taxon>Tephritoidea</taxon>
        <taxon>Tephritidae</taxon>
        <taxon>Bactrocera</taxon>
        <taxon>Bactrocera</taxon>
    </lineage>
</organism>
<reference key="1">
    <citation type="journal article" date="1994" name="Insect Biochem. Mol. Biol.">
        <title>The actin gene family in the oriental fruit fly Bactrocera dorsalis. Muscle specific actins.</title>
        <authorList>
            <person name="He M."/>
            <person name="Haymer D.S."/>
        </authorList>
    </citation>
    <scope>NUCLEOTIDE SEQUENCE [GENOMIC DNA]</scope>
    <source>
        <strain>Puna</strain>
    </source>
</reference>
<proteinExistence type="evidence at transcript level"/>
<comment type="function">
    <text>Actins are highly conserved proteins that are involved in various types of cell motility and are ubiquitously expressed in all eukaryotic cells.</text>
</comment>
<comment type="catalytic activity">
    <reaction evidence="2">
        <text>ATP + H2O = ADP + phosphate + H(+)</text>
        <dbReference type="Rhea" id="RHEA:13065"/>
        <dbReference type="ChEBI" id="CHEBI:15377"/>
        <dbReference type="ChEBI" id="CHEBI:15378"/>
        <dbReference type="ChEBI" id="CHEBI:30616"/>
        <dbReference type="ChEBI" id="CHEBI:43474"/>
        <dbReference type="ChEBI" id="CHEBI:456216"/>
    </reaction>
</comment>
<comment type="subcellular location">
    <subcellularLocation>
        <location>Cytoplasm</location>
        <location>Cytoskeleton</location>
    </subcellularLocation>
</comment>
<comment type="tissue specificity">
    <text>Muscle.</text>
</comment>
<comment type="PTM">
    <text evidence="1">Oxidation of Met-45 to form methionine sulfoxide promotes actin filament depolymerization. Methionine sulfoxide is produced stereospecifically, but it is not known whether the (S)-S-oxide or the (R)-S-oxide is produced (By similarity).</text>
</comment>
<comment type="similarity">
    <text evidence="3">Belongs to the actin family.</text>
</comment>
<sequence length="376" mass="41803">MCDDEVAALVVDNGSGMCKAGFAGDDAPRAVFPSIVGRPRHQGVMVGMGQKDSYVGDEAQSKRGILTLKYPIEHGIITNWDDMEKIWHHTFYNELRVAPEEHPVLLTEAPLNPKANREKMTQIMFETFNSPAMYVAIQAVLSLYASGRTTGIVLDSGDGVSHTVPIYEGYALPHAILRLDLAGRDLTDYLMKILTERGYSFTTTAEREIVRDIKEKLCYVALDFEQEMATAAASTSLEKSYELPDGQVITIGNERFRCPESLFQPSFLGMESSGIHETVYNSIMKCDVDIRKDLYANIVMSGGTTMYPGIADRMQKEITALAPSTIKIKIIAPPERKYSVWIGGSILASLSTFQQMWISKEEYDESGPGIVHRKCF</sequence>
<accession>P45885</accession>
<name>ACT2_BACDO</name>
<keyword id="KW-0007">Acetylation</keyword>
<keyword id="KW-0067">ATP-binding</keyword>
<keyword id="KW-0963">Cytoplasm</keyword>
<keyword id="KW-0206">Cytoskeleton</keyword>
<keyword id="KW-0378">Hydrolase</keyword>
<keyword id="KW-0514">Muscle protein</keyword>
<keyword id="KW-0547">Nucleotide-binding</keyword>
<keyword id="KW-0558">Oxidation</keyword>
<keyword id="KW-1185">Reference proteome</keyword>